<protein>
    <recommendedName>
        <fullName evidence="1">5'-nucleotidase SurE</fullName>
        <ecNumber evidence="1">3.1.3.5</ecNumber>
    </recommendedName>
    <alternativeName>
        <fullName evidence="1">Nucleoside 5'-monophosphate phosphohydrolase</fullName>
    </alternativeName>
</protein>
<proteinExistence type="inferred from homology"/>
<organism>
    <name type="scientific">Ruthia magnifica subsp. Calyptogena magnifica</name>
    <dbReference type="NCBI Taxonomy" id="413404"/>
    <lineage>
        <taxon>Bacteria</taxon>
        <taxon>Pseudomonadati</taxon>
        <taxon>Pseudomonadota</taxon>
        <taxon>Gammaproteobacteria</taxon>
        <taxon>Candidatus Pseudothioglobaceae</taxon>
        <taxon>Candidatus Ruthturnera</taxon>
    </lineage>
</organism>
<dbReference type="EC" id="3.1.3.5" evidence="1"/>
<dbReference type="EMBL" id="CP000488">
    <property type="protein sequence ID" value="ABL02623.1"/>
    <property type="molecule type" value="Genomic_DNA"/>
</dbReference>
<dbReference type="RefSeq" id="WP_011738248.1">
    <property type="nucleotide sequence ID" value="NC_008610.1"/>
</dbReference>
<dbReference type="SMR" id="A1AXG6"/>
<dbReference type="STRING" id="413404.Rmag_0910"/>
<dbReference type="KEGG" id="rma:Rmag_0910"/>
<dbReference type="eggNOG" id="COG0496">
    <property type="taxonomic scope" value="Bacteria"/>
</dbReference>
<dbReference type="HOGENOM" id="CLU_045192_1_2_6"/>
<dbReference type="OrthoDB" id="9780815at2"/>
<dbReference type="Proteomes" id="UP000002587">
    <property type="component" value="Chromosome"/>
</dbReference>
<dbReference type="GO" id="GO:0005737">
    <property type="term" value="C:cytoplasm"/>
    <property type="evidence" value="ECO:0007669"/>
    <property type="project" value="UniProtKB-SubCell"/>
</dbReference>
<dbReference type="GO" id="GO:0008254">
    <property type="term" value="F:3'-nucleotidase activity"/>
    <property type="evidence" value="ECO:0007669"/>
    <property type="project" value="TreeGrafter"/>
</dbReference>
<dbReference type="GO" id="GO:0008253">
    <property type="term" value="F:5'-nucleotidase activity"/>
    <property type="evidence" value="ECO:0007669"/>
    <property type="project" value="UniProtKB-UniRule"/>
</dbReference>
<dbReference type="GO" id="GO:0004309">
    <property type="term" value="F:exopolyphosphatase activity"/>
    <property type="evidence" value="ECO:0007669"/>
    <property type="project" value="TreeGrafter"/>
</dbReference>
<dbReference type="GO" id="GO:0046872">
    <property type="term" value="F:metal ion binding"/>
    <property type="evidence" value="ECO:0007669"/>
    <property type="project" value="UniProtKB-UniRule"/>
</dbReference>
<dbReference type="GO" id="GO:0000166">
    <property type="term" value="F:nucleotide binding"/>
    <property type="evidence" value="ECO:0007669"/>
    <property type="project" value="UniProtKB-KW"/>
</dbReference>
<dbReference type="FunFam" id="3.40.1210.10:FF:000001">
    <property type="entry name" value="5'/3'-nucleotidase SurE"/>
    <property type="match status" value="1"/>
</dbReference>
<dbReference type="Gene3D" id="3.40.1210.10">
    <property type="entry name" value="Survival protein SurE-like phosphatase/nucleotidase"/>
    <property type="match status" value="1"/>
</dbReference>
<dbReference type="HAMAP" id="MF_00060">
    <property type="entry name" value="SurE"/>
    <property type="match status" value="1"/>
</dbReference>
<dbReference type="InterPro" id="IPR030048">
    <property type="entry name" value="SurE"/>
</dbReference>
<dbReference type="InterPro" id="IPR002828">
    <property type="entry name" value="SurE-like_Pase/nucleotidase"/>
</dbReference>
<dbReference type="InterPro" id="IPR036523">
    <property type="entry name" value="SurE-like_sf"/>
</dbReference>
<dbReference type="NCBIfam" id="NF001489">
    <property type="entry name" value="PRK00346.1-3"/>
    <property type="match status" value="1"/>
</dbReference>
<dbReference type="NCBIfam" id="NF001490">
    <property type="entry name" value="PRK00346.1-4"/>
    <property type="match status" value="1"/>
</dbReference>
<dbReference type="NCBIfam" id="TIGR00087">
    <property type="entry name" value="surE"/>
    <property type="match status" value="1"/>
</dbReference>
<dbReference type="PANTHER" id="PTHR30457">
    <property type="entry name" value="5'-NUCLEOTIDASE SURE"/>
    <property type="match status" value="1"/>
</dbReference>
<dbReference type="PANTHER" id="PTHR30457:SF12">
    <property type="entry name" value="5'_3'-NUCLEOTIDASE SURE"/>
    <property type="match status" value="1"/>
</dbReference>
<dbReference type="Pfam" id="PF01975">
    <property type="entry name" value="SurE"/>
    <property type="match status" value="1"/>
</dbReference>
<dbReference type="SUPFAM" id="SSF64167">
    <property type="entry name" value="SurE-like"/>
    <property type="match status" value="1"/>
</dbReference>
<name>SURE_RUTMC</name>
<reference key="1">
    <citation type="journal article" date="2007" name="Science">
        <title>The Calyptogena magnifica chemoautotrophic symbiont genome.</title>
        <authorList>
            <person name="Newton I.L.G."/>
            <person name="Woyke T."/>
            <person name="Auchtung T.A."/>
            <person name="Dilly G.F."/>
            <person name="Dutton R.J."/>
            <person name="Fisher M.C."/>
            <person name="Fontanez K.M."/>
            <person name="Lau E."/>
            <person name="Stewart F.J."/>
            <person name="Richardson P.M."/>
            <person name="Barry K.W."/>
            <person name="Saunders E."/>
            <person name="Detter J.C."/>
            <person name="Wu D."/>
            <person name="Eisen J.A."/>
            <person name="Cavanaugh C.M."/>
        </authorList>
    </citation>
    <scope>NUCLEOTIDE SEQUENCE [LARGE SCALE GENOMIC DNA]</scope>
</reference>
<accession>A1AXG6</accession>
<gene>
    <name evidence="1" type="primary">surE</name>
    <name type="ordered locus">Rmag_0910</name>
</gene>
<comment type="function">
    <text evidence="1">Nucleotidase that shows phosphatase activity on nucleoside 5'-monophosphates.</text>
</comment>
<comment type="catalytic activity">
    <reaction evidence="1">
        <text>a ribonucleoside 5'-phosphate + H2O = a ribonucleoside + phosphate</text>
        <dbReference type="Rhea" id="RHEA:12484"/>
        <dbReference type="ChEBI" id="CHEBI:15377"/>
        <dbReference type="ChEBI" id="CHEBI:18254"/>
        <dbReference type="ChEBI" id="CHEBI:43474"/>
        <dbReference type="ChEBI" id="CHEBI:58043"/>
        <dbReference type="EC" id="3.1.3.5"/>
    </reaction>
</comment>
<comment type="cofactor">
    <cofactor evidence="1">
        <name>a divalent metal cation</name>
        <dbReference type="ChEBI" id="CHEBI:60240"/>
    </cofactor>
    <text evidence="1">Binds 1 divalent metal cation per subunit.</text>
</comment>
<comment type="subcellular location">
    <subcellularLocation>
        <location evidence="1">Cytoplasm</location>
    </subcellularLocation>
</comment>
<comment type="similarity">
    <text evidence="1">Belongs to the SurE nucleotidase family.</text>
</comment>
<feature type="chain" id="PRO_1000007787" description="5'-nucleotidase SurE">
    <location>
        <begin position="1"/>
        <end position="247"/>
    </location>
</feature>
<feature type="binding site" evidence="1">
    <location>
        <position position="8"/>
    </location>
    <ligand>
        <name>a divalent metal cation</name>
        <dbReference type="ChEBI" id="CHEBI:60240"/>
    </ligand>
</feature>
<feature type="binding site" evidence="1">
    <location>
        <position position="9"/>
    </location>
    <ligand>
        <name>a divalent metal cation</name>
        <dbReference type="ChEBI" id="CHEBI:60240"/>
    </ligand>
</feature>
<feature type="binding site" evidence="1">
    <location>
        <position position="39"/>
    </location>
    <ligand>
        <name>a divalent metal cation</name>
        <dbReference type="ChEBI" id="CHEBI:60240"/>
    </ligand>
</feature>
<feature type="binding site" evidence="1">
    <location>
        <position position="91"/>
    </location>
    <ligand>
        <name>a divalent metal cation</name>
        <dbReference type="ChEBI" id="CHEBI:60240"/>
    </ligand>
</feature>
<sequence length="247" mass="26915">MKILISNDDGYQAPGIVQLAQSLTQEHEIIVVAPSENKSASSSSLTFDNPLRPIQISNNVYKIDATPSDCVHLALCGFLNEKIDLVVTGINFGANLGDDVIYSGTVAGAIEGRFLGLPSVAISLASWKGQHFETAGIIAKQLINQISHTQLSHDTVLNVNVPDVSLNYIKGFQTTRLGKRHMSEQSVADKDDPTLYWIGENGKEADNGVGTDFHAIANYYVSVTPLQIDLTKYNEIDTVSKWLNQIK</sequence>
<evidence type="ECO:0000255" key="1">
    <source>
        <dbReference type="HAMAP-Rule" id="MF_00060"/>
    </source>
</evidence>
<keyword id="KW-0963">Cytoplasm</keyword>
<keyword id="KW-0378">Hydrolase</keyword>
<keyword id="KW-0479">Metal-binding</keyword>
<keyword id="KW-0547">Nucleotide-binding</keyword>